<reference key="1">
    <citation type="journal article" date="2011" name="J. Bacteriol.">
        <title>Comparative genomics of 28 Salmonella enterica isolates: evidence for CRISPR-mediated adaptive sublineage evolution.</title>
        <authorList>
            <person name="Fricke W.F."/>
            <person name="Mammel M.K."/>
            <person name="McDermott P.F."/>
            <person name="Tartera C."/>
            <person name="White D.G."/>
            <person name="Leclerc J.E."/>
            <person name="Ravel J."/>
            <person name="Cebula T.A."/>
        </authorList>
    </citation>
    <scope>NUCLEOTIDE SEQUENCE [LARGE SCALE GENOMIC DNA]</scope>
    <source>
        <strain>SL476</strain>
    </source>
</reference>
<feature type="chain" id="PRO_1000147559" description="Quinate/shikimate dehydrogenase">
    <location>
        <begin position="1"/>
        <end position="288"/>
    </location>
</feature>
<feature type="binding site" evidence="1">
    <location>
        <position position="71"/>
    </location>
    <ligand>
        <name>substrate</name>
    </ligand>
</feature>
<feature type="binding site" evidence="1">
    <location>
        <position position="107"/>
    </location>
    <ligand>
        <name>substrate</name>
    </ligand>
</feature>
<feature type="binding site" evidence="1">
    <location>
        <begin position="132"/>
        <end position="135"/>
    </location>
    <ligand>
        <name>NAD(+)</name>
        <dbReference type="ChEBI" id="CHEBI:57540"/>
    </ligand>
</feature>
<feature type="binding site" evidence="1">
    <location>
        <begin position="155"/>
        <end position="158"/>
    </location>
    <ligand>
        <name>NAD(+)</name>
        <dbReference type="ChEBI" id="CHEBI:57540"/>
    </ligand>
</feature>
<feature type="binding site" evidence="1">
    <location>
        <position position="205"/>
    </location>
    <ligand>
        <name>NAD(+)</name>
        <dbReference type="ChEBI" id="CHEBI:57540"/>
    </ligand>
</feature>
<feature type="binding site" evidence="1">
    <location>
        <begin position="232"/>
        <end position="235"/>
    </location>
    <ligand>
        <name>NAD(+)</name>
        <dbReference type="ChEBI" id="CHEBI:57540"/>
    </ligand>
</feature>
<feature type="binding site" evidence="1">
    <location>
        <position position="255"/>
    </location>
    <ligand>
        <name>NAD(+)</name>
        <dbReference type="ChEBI" id="CHEBI:57540"/>
    </ligand>
</feature>
<accession>B4TGJ7</accession>
<dbReference type="EC" id="1.1.1.282" evidence="1"/>
<dbReference type="EMBL" id="CP001120">
    <property type="protein sequence ID" value="ACF69023.1"/>
    <property type="molecule type" value="Genomic_DNA"/>
</dbReference>
<dbReference type="RefSeq" id="WP_000383488.1">
    <property type="nucleotide sequence ID" value="NC_011083.1"/>
</dbReference>
<dbReference type="SMR" id="B4TGJ7"/>
<dbReference type="KEGG" id="seh:SeHA_C1490"/>
<dbReference type="HOGENOM" id="CLU_044063_4_4_6"/>
<dbReference type="UniPathway" id="UPA00053">
    <property type="reaction ID" value="UER00087"/>
</dbReference>
<dbReference type="Proteomes" id="UP000001866">
    <property type="component" value="Chromosome"/>
</dbReference>
<dbReference type="GO" id="GO:0030266">
    <property type="term" value="F:quinate 3-dehydrogenase (NAD+) activity"/>
    <property type="evidence" value="ECO:0007669"/>
    <property type="project" value="UniProtKB-UniRule"/>
</dbReference>
<dbReference type="GO" id="GO:0052733">
    <property type="term" value="F:quinate 3-dehydrogenase (NADP+) activity"/>
    <property type="evidence" value="ECO:0007669"/>
    <property type="project" value="InterPro"/>
</dbReference>
<dbReference type="GO" id="GO:0052734">
    <property type="term" value="F:shikimate 3-dehydrogenase (NAD+) activity"/>
    <property type="evidence" value="ECO:0007669"/>
    <property type="project" value="InterPro"/>
</dbReference>
<dbReference type="GO" id="GO:0004764">
    <property type="term" value="F:shikimate 3-dehydrogenase (NADP+) activity"/>
    <property type="evidence" value="ECO:0007669"/>
    <property type="project" value="UniProtKB-UniRule"/>
</dbReference>
<dbReference type="GO" id="GO:0008652">
    <property type="term" value="P:amino acid biosynthetic process"/>
    <property type="evidence" value="ECO:0007669"/>
    <property type="project" value="UniProtKB-KW"/>
</dbReference>
<dbReference type="GO" id="GO:0009073">
    <property type="term" value="P:aromatic amino acid family biosynthetic process"/>
    <property type="evidence" value="ECO:0007669"/>
    <property type="project" value="UniProtKB-KW"/>
</dbReference>
<dbReference type="GO" id="GO:0009423">
    <property type="term" value="P:chorismate biosynthetic process"/>
    <property type="evidence" value="ECO:0007669"/>
    <property type="project" value="UniProtKB-UniRule"/>
</dbReference>
<dbReference type="GO" id="GO:0019632">
    <property type="term" value="P:shikimate metabolic process"/>
    <property type="evidence" value="ECO:0007669"/>
    <property type="project" value="TreeGrafter"/>
</dbReference>
<dbReference type="CDD" id="cd01065">
    <property type="entry name" value="NAD_bind_Shikimate_DH"/>
    <property type="match status" value="1"/>
</dbReference>
<dbReference type="FunFam" id="3.40.50.10860:FF:000004">
    <property type="entry name" value="Quinate/shikimate dehydrogenase"/>
    <property type="match status" value="1"/>
</dbReference>
<dbReference type="FunFam" id="3.40.50.720:FF:000086">
    <property type="entry name" value="Quinate/shikimate dehydrogenase"/>
    <property type="match status" value="1"/>
</dbReference>
<dbReference type="Gene3D" id="3.40.50.10860">
    <property type="entry name" value="Leucine Dehydrogenase, chain A, domain 1"/>
    <property type="match status" value="1"/>
</dbReference>
<dbReference type="Gene3D" id="3.40.50.720">
    <property type="entry name" value="NAD(P)-binding Rossmann-like Domain"/>
    <property type="match status" value="1"/>
</dbReference>
<dbReference type="HAMAP" id="MF_00222">
    <property type="entry name" value="Shikimate_DH_AroE"/>
    <property type="match status" value="1"/>
</dbReference>
<dbReference type="HAMAP" id="MF_01578">
    <property type="entry name" value="Shikimate_DH_YdiB"/>
    <property type="match status" value="1"/>
</dbReference>
<dbReference type="InterPro" id="IPR046346">
    <property type="entry name" value="Aminoacid_DH-like_N_sf"/>
</dbReference>
<dbReference type="InterPro" id="IPR036291">
    <property type="entry name" value="NAD(P)-bd_dom_sf"/>
</dbReference>
<dbReference type="InterPro" id="IPR022872">
    <property type="entry name" value="Quinate/Shikimate_DH"/>
</dbReference>
<dbReference type="InterPro" id="IPR041121">
    <property type="entry name" value="SDH_C"/>
</dbReference>
<dbReference type="InterPro" id="IPR013708">
    <property type="entry name" value="Shikimate_DH-bd_N"/>
</dbReference>
<dbReference type="InterPro" id="IPR022893">
    <property type="entry name" value="Shikimate_DH_fam"/>
</dbReference>
<dbReference type="NCBIfam" id="NF009390">
    <property type="entry name" value="PRK12749.1"/>
    <property type="match status" value="1"/>
</dbReference>
<dbReference type="PANTHER" id="PTHR21089:SF1">
    <property type="entry name" value="BIFUNCTIONAL 3-DEHYDROQUINATE DEHYDRATASE_SHIKIMATE DEHYDROGENASE, CHLOROPLASTIC"/>
    <property type="match status" value="1"/>
</dbReference>
<dbReference type="PANTHER" id="PTHR21089">
    <property type="entry name" value="SHIKIMATE DEHYDROGENASE"/>
    <property type="match status" value="1"/>
</dbReference>
<dbReference type="Pfam" id="PF18317">
    <property type="entry name" value="SDH_C"/>
    <property type="match status" value="1"/>
</dbReference>
<dbReference type="Pfam" id="PF08501">
    <property type="entry name" value="Shikimate_dh_N"/>
    <property type="match status" value="1"/>
</dbReference>
<dbReference type="SUPFAM" id="SSF53223">
    <property type="entry name" value="Aminoacid dehydrogenase-like, N-terminal domain"/>
    <property type="match status" value="1"/>
</dbReference>
<dbReference type="SUPFAM" id="SSF51735">
    <property type="entry name" value="NAD(P)-binding Rossmann-fold domains"/>
    <property type="match status" value="1"/>
</dbReference>
<sequence length="288" mass="31319">MDVTAKYELIGLMAYPIRHSLSPEMQNKALEKAGLPYTYMAFEVDNTTFASAIEGLKALKMRGTGVSMPNKQLACEYVDELTPAAKLVGAINTIVNDDGYLRGYNTDGTGHIRAIKESGFDIRGKTMVLLGAGGAATAIGAQAAIEGIKEIKLFNRKDDFFEKAVAFAKRVNENTDCVVTVTDLADQHAFTEALASADILTNGTKVGMKPLENESLIGDVSLLRPELLVTECVYNPHMTKLLQQAQQAGCKTIDGYGMLLWQGAEQFELWTGKAFPLDYVKQVMGFTA</sequence>
<gene>
    <name evidence="1" type="primary">ydiB</name>
    <name type="ordered locus">SeHA_C1490</name>
</gene>
<evidence type="ECO:0000255" key="1">
    <source>
        <dbReference type="HAMAP-Rule" id="MF_01578"/>
    </source>
</evidence>
<comment type="function">
    <text evidence="1">The actual biological function of YdiB remains unclear, nor is it known whether 3-dehydroshikimate or quinate represents the natural substrate. Catalyzes the reversible NAD-dependent reduction of both 3-dehydroshikimate (DHSA) and 3-dehydroquinate to yield shikimate (SA) and quinate, respectively. It can use both NAD or NADP for catalysis, however it has higher catalytic efficiency with NAD.</text>
</comment>
<comment type="catalytic activity">
    <reaction evidence="1">
        <text>L-quinate + NAD(+) = 3-dehydroquinate + NADH + H(+)</text>
        <dbReference type="Rhea" id="RHEA:22364"/>
        <dbReference type="ChEBI" id="CHEBI:15378"/>
        <dbReference type="ChEBI" id="CHEBI:29751"/>
        <dbReference type="ChEBI" id="CHEBI:32364"/>
        <dbReference type="ChEBI" id="CHEBI:57540"/>
        <dbReference type="ChEBI" id="CHEBI:57945"/>
        <dbReference type="EC" id="1.1.1.282"/>
    </reaction>
</comment>
<comment type="catalytic activity">
    <reaction evidence="1">
        <text>L-quinate + NADP(+) = 3-dehydroquinate + NADPH + H(+)</text>
        <dbReference type="Rhea" id="RHEA:18425"/>
        <dbReference type="ChEBI" id="CHEBI:15378"/>
        <dbReference type="ChEBI" id="CHEBI:29751"/>
        <dbReference type="ChEBI" id="CHEBI:32364"/>
        <dbReference type="ChEBI" id="CHEBI:57783"/>
        <dbReference type="ChEBI" id="CHEBI:58349"/>
        <dbReference type="EC" id="1.1.1.282"/>
    </reaction>
</comment>
<comment type="catalytic activity">
    <reaction evidence="1">
        <text>shikimate + NADP(+) = 3-dehydroshikimate + NADPH + H(+)</text>
        <dbReference type="Rhea" id="RHEA:17737"/>
        <dbReference type="ChEBI" id="CHEBI:15378"/>
        <dbReference type="ChEBI" id="CHEBI:16630"/>
        <dbReference type="ChEBI" id="CHEBI:36208"/>
        <dbReference type="ChEBI" id="CHEBI:57783"/>
        <dbReference type="ChEBI" id="CHEBI:58349"/>
        <dbReference type="EC" id="1.1.1.282"/>
    </reaction>
</comment>
<comment type="catalytic activity">
    <reaction evidence="1">
        <text>shikimate + NAD(+) = 3-dehydroshikimate + NADH + H(+)</text>
        <dbReference type="Rhea" id="RHEA:17741"/>
        <dbReference type="ChEBI" id="CHEBI:15378"/>
        <dbReference type="ChEBI" id="CHEBI:16630"/>
        <dbReference type="ChEBI" id="CHEBI:36208"/>
        <dbReference type="ChEBI" id="CHEBI:57540"/>
        <dbReference type="ChEBI" id="CHEBI:57945"/>
        <dbReference type="EC" id="1.1.1.282"/>
    </reaction>
</comment>
<comment type="pathway">
    <text evidence="1">Metabolic intermediate biosynthesis; chorismate biosynthesis; chorismate from D-erythrose 4-phosphate and phosphoenolpyruvate: step 4/7.</text>
</comment>
<comment type="subunit">
    <text evidence="1">Homodimer.</text>
</comment>
<comment type="similarity">
    <text evidence="1">Belongs to the shikimate dehydrogenase family.</text>
</comment>
<keyword id="KW-0028">Amino-acid biosynthesis</keyword>
<keyword id="KW-0057">Aromatic amino acid biosynthesis</keyword>
<keyword id="KW-0520">NAD</keyword>
<keyword id="KW-0521">NADP</keyword>
<keyword id="KW-0560">Oxidoreductase</keyword>
<organism>
    <name type="scientific">Salmonella heidelberg (strain SL476)</name>
    <dbReference type="NCBI Taxonomy" id="454169"/>
    <lineage>
        <taxon>Bacteria</taxon>
        <taxon>Pseudomonadati</taxon>
        <taxon>Pseudomonadota</taxon>
        <taxon>Gammaproteobacteria</taxon>
        <taxon>Enterobacterales</taxon>
        <taxon>Enterobacteriaceae</taxon>
        <taxon>Salmonella</taxon>
    </lineage>
</organism>
<proteinExistence type="inferred from homology"/>
<protein>
    <recommendedName>
        <fullName evidence="1">Quinate/shikimate dehydrogenase</fullName>
        <ecNumber evidence="1">1.1.1.282</ecNumber>
    </recommendedName>
    <alternativeName>
        <fullName evidence="1">NAD-dependent shikimate 5-dehydrogenase</fullName>
    </alternativeName>
</protein>
<name>YDIB_SALHS</name>